<keyword id="KW-0963">Cytoplasm</keyword>
<keyword id="KW-0378">Hydrolase</keyword>
<keyword id="KW-0694">RNA-binding</keyword>
<keyword id="KW-0820">tRNA-binding</keyword>
<accession>A0QBW3</accession>
<protein>
    <recommendedName>
        <fullName evidence="1">Peptidyl-tRNA hydrolase</fullName>
        <shortName evidence="1">Pth</shortName>
        <ecNumber evidence="1">3.1.1.29</ecNumber>
    </recommendedName>
</protein>
<comment type="function">
    <text evidence="1">Hydrolyzes ribosome-free peptidyl-tRNAs (with 1 or more amino acids incorporated), which drop off the ribosome during protein synthesis, or as a result of ribosome stalling.</text>
</comment>
<comment type="function">
    <text evidence="1">Catalyzes the release of premature peptidyl moieties from peptidyl-tRNA molecules trapped in stalled 50S ribosomal subunits, and thus maintains levels of free tRNAs and 50S ribosomes.</text>
</comment>
<comment type="catalytic activity">
    <reaction evidence="1">
        <text>an N-acyl-L-alpha-aminoacyl-tRNA + H2O = an N-acyl-L-amino acid + a tRNA + H(+)</text>
        <dbReference type="Rhea" id="RHEA:54448"/>
        <dbReference type="Rhea" id="RHEA-COMP:10123"/>
        <dbReference type="Rhea" id="RHEA-COMP:13883"/>
        <dbReference type="ChEBI" id="CHEBI:15377"/>
        <dbReference type="ChEBI" id="CHEBI:15378"/>
        <dbReference type="ChEBI" id="CHEBI:59874"/>
        <dbReference type="ChEBI" id="CHEBI:78442"/>
        <dbReference type="ChEBI" id="CHEBI:138191"/>
        <dbReference type="EC" id="3.1.1.29"/>
    </reaction>
</comment>
<comment type="subunit">
    <text evidence="1">Monomer.</text>
</comment>
<comment type="subcellular location">
    <subcellularLocation>
        <location evidence="1">Cytoplasm</location>
    </subcellularLocation>
</comment>
<comment type="similarity">
    <text evidence="1">Belongs to the PTH family.</text>
</comment>
<evidence type="ECO:0000255" key="1">
    <source>
        <dbReference type="HAMAP-Rule" id="MF_00083"/>
    </source>
</evidence>
<dbReference type="EC" id="3.1.1.29" evidence="1"/>
<dbReference type="EMBL" id="CP000479">
    <property type="protein sequence ID" value="ABK67555.1"/>
    <property type="molecule type" value="Genomic_DNA"/>
</dbReference>
<dbReference type="RefSeq" id="WP_011723973.1">
    <property type="nucleotide sequence ID" value="NC_008595.1"/>
</dbReference>
<dbReference type="SMR" id="A0QBW3"/>
<dbReference type="KEGG" id="mav:MAV_1151"/>
<dbReference type="HOGENOM" id="CLU_062456_2_2_11"/>
<dbReference type="Proteomes" id="UP000001574">
    <property type="component" value="Chromosome"/>
</dbReference>
<dbReference type="GO" id="GO:0005737">
    <property type="term" value="C:cytoplasm"/>
    <property type="evidence" value="ECO:0007669"/>
    <property type="project" value="UniProtKB-SubCell"/>
</dbReference>
<dbReference type="GO" id="GO:0004045">
    <property type="term" value="F:peptidyl-tRNA hydrolase activity"/>
    <property type="evidence" value="ECO:0007669"/>
    <property type="project" value="UniProtKB-UniRule"/>
</dbReference>
<dbReference type="GO" id="GO:0000049">
    <property type="term" value="F:tRNA binding"/>
    <property type="evidence" value="ECO:0007669"/>
    <property type="project" value="UniProtKB-UniRule"/>
</dbReference>
<dbReference type="GO" id="GO:0006515">
    <property type="term" value="P:protein quality control for misfolded or incompletely synthesized proteins"/>
    <property type="evidence" value="ECO:0007669"/>
    <property type="project" value="UniProtKB-UniRule"/>
</dbReference>
<dbReference type="GO" id="GO:0072344">
    <property type="term" value="P:rescue of stalled ribosome"/>
    <property type="evidence" value="ECO:0007669"/>
    <property type="project" value="UniProtKB-UniRule"/>
</dbReference>
<dbReference type="CDD" id="cd00462">
    <property type="entry name" value="PTH"/>
    <property type="match status" value="1"/>
</dbReference>
<dbReference type="FunFam" id="3.40.50.1470:FF:000001">
    <property type="entry name" value="Peptidyl-tRNA hydrolase"/>
    <property type="match status" value="1"/>
</dbReference>
<dbReference type="Gene3D" id="3.40.50.1470">
    <property type="entry name" value="Peptidyl-tRNA hydrolase"/>
    <property type="match status" value="1"/>
</dbReference>
<dbReference type="HAMAP" id="MF_00083">
    <property type="entry name" value="Pept_tRNA_hydro_bact"/>
    <property type="match status" value="1"/>
</dbReference>
<dbReference type="InterPro" id="IPR001328">
    <property type="entry name" value="Pept_tRNA_hydro"/>
</dbReference>
<dbReference type="InterPro" id="IPR018171">
    <property type="entry name" value="Pept_tRNA_hydro_CS"/>
</dbReference>
<dbReference type="InterPro" id="IPR036416">
    <property type="entry name" value="Pept_tRNA_hydro_sf"/>
</dbReference>
<dbReference type="NCBIfam" id="TIGR00447">
    <property type="entry name" value="pth"/>
    <property type="match status" value="1"/>
</dbReference>
<dbReference type="PANTHER" id="PTHR17224">
    <property type="entry name" value="PEPTIDYL-TRNA HYDROLASE"/>
    <property type="match status" value="1"/>
</dbReference>
<dbReference type="PANTHER" id="PTHR17224:SF1">
    <property type="entry name" value="PEPTIDYL-TRNA HYDROLASE"/>
    <property type="match status" value="1"/>
</dbReference>
<dbReference type="Pfam" id="PF01195">
    <property type="entry name" value="Pept_tRNA_hydro"/>
    <property type="match status" value="1"/>
</dbReference>
<dbReference type="SUPFAM" id="SSF53178">
    <property type="entry name" value="Peptidyl-tRNA hydrolase-like"/>
    <property type="match status" value="1"/>
</dbReference>
<dbReference type="PROSITE" id="PS01195">
    <property type="entry name" value="PEPT_TRNA_HYDROL_1"/>
    <property type="match status" value="1"/>
</dbReference>
<dbReference type="PROSITE" id="PS01196">
    <property type="entry name" value="PEPT_TRNA_HYDROL_2"/>
    <property type="match status" value="1"/>
</dbReference>
<reference key="1">
    <citation type="submission" date="2006-10" db="EMBL/GenBank/DDBJ databases">
        <authorList>
            <person name="Fleischmann R.D."/>
            <person name="Dodson R.J."/>
            <person name="Haft D.H."/>
            <person name="Merkel J.S."/>
            <person name="Nelson W.C."/>
            <person name="Fraser C.M."/>
        </authorList>
    </citation>
    <scope>NUCLEOTIDE SEQUENCE [LARGE SCALE GENOMIC DNA]</scope>
    <source>
        <strain>104</strain>
    </source>
</reference>
<sequence>MAEPLLVVGLGNPGDNYARTRHNVGFMVADLLAARMGSKFKAHKRSGAEIVSGRLAGRSVVVAKPRCYMNESGRQVGPLAKFYSVPPGDIIVIHDDLDLDFGRIRLKIGGGEGGHNGLRSVSNALGSKDFQRVRIGIGRPPGRKDPAAFVLENFTSTERADVPTICEQAADATELLIELGLEPAQNRVHAW</sequence>
<feature type="chain" id="PRO_1000010611" description="Peptidyl-tRNA hydrolase">
    <location>
        <begin position="1"/>
        <end position="191"/>
    </location>
</feature>
<feature type="active site" description="Proton acceptor" evidence="1">
    <location>
        <position position="22"/>
    </location>
</feature>
<feature type="binding site" evidence="1">
    <location>
        <position position="17"/>
    </location>
    <ligand>
        <name>tRNA</name>
        <dbReference type="ChEBI" id="CHEBI:17843"/>
    </ligand>
</feature>
<feature type="binding site" evidence="1">
    <location>
        <position position="68"/>
    </location>
    <ligand>
        <name>tRNA</name>
        <dbReference type="ChEBI" id="CHEBI:17843"/>
    </ligand>
</feature>
<feature type="binding site" evidence="1">
    <location>
        <position position="70"/>
    </location>
    <ligand>
        <name>tRNA</name>
        <dbReference type="ChEBI" id="CHEBI:17843"/>
    </ligand>
</feature>
<feature type="binding site" evidence="1">
    <location>
        <position position="116"/>
    </location>
    <ligand>
        <name>tRNA</name>
        <dbReference type="ChEBI" id="CHEBI:17843"/>
    </ligand>
</feature>
<feature type="site" description="Discriminates between blocked and unblocked aminoacyl-tRNA" evidence="1">
    <location>
        <position position="12"/>
    </location>
</feature>
<feature type="site" description="Stabilizes the basic form of H active site to accept a proton" evidence="1">
    <location>
        <position position="95"/>
    </location>
</feature>
<name>PTH_MYCA1</name>
<gene>
    <name evidence="1" type="primary">pth</name>
    <name type="ordered locus">MAV_1151</name>
</gene>
<proteinExistence type="inferred from homology"/>
<organism>
    <name type="scientific">Mycobacterium avium (strain 104)</name>
    <dbReference type="NCBI Taxonomy" id="243243"/>
    <lineage>
        <taxon>Bacteria</taxon>
        <taxon>Bacillati</taxon>
        <taxon>Actinomycetota</taxon>
        <taxon>Actinomycetes</taxon>
        <taxon>Mycobacteriales</taxon>
        <taxon>Mycobacteriaceae</taxon>
        <taxon>Mycobacterium</taxon>
        <taxon>Mycobacterium avium complex (MAC)</taxon>
    </lineage>
</organism>